<evidence type="ECO:0000250" key="1">
    <source>
        <dbReference type="UniProtKB" id="Q2G2U6"/>
    </source>
</evidence>
<evidence type="ECO:0000250" key="2">
    <source>
        <dbReference type="UniProtKB" id="Q7A8E1"/>
    </source>
</evidence>
<evidence type="ECO:0000250" key="3">
    <source>
        <dbReference type="UniProtKB" id="Q9RDT5"/>
    </source>
</evidence>
<evidence type="ECO:0000255" key="4">
    <source>
        <dbReference type="PROSITE-ProRule" id="PRU00169"/>
    </source>
</evidence>
<evidence type="ECO:0000255" key="5">
    <source>
        <dbReference type="PROSITE-ProRule" id="PRU01091"/>
    </source>
</evidence>
<evidence type="ECO:0000305" key="6"/>
<dbReference type="EMBL" id="CP000736">
    <property type="protein sequence ID" value="ABR50886.1"/>
    <property type="molecule type" value="Genomic_DNA"/>
</dbReference>
<dbReference type="SMR" id="A6TXG8"/>
<dbReference type="KEGG" id="sah:SaurJH1_0018"/>
<dbReference type="HOGENOM" id="CLU_000445_30_4_9"/>
<dbReference type="GO" id="GO:0005829">
    <property type="term" value="C:cytosol"/>
    <property type="evidence" value="ECO:0007669"/>
    <property type="project" value="TreeGrafter"/>
</dbReference>
<dbReference type="GO" id="GO:0032993">
    <property type="term" value="C:protein-DNA complex"/>
    <property type="evidence" value="ECO:0007669"/>
    <property type="project" value="TreeGrafter"/>
</dbReference>
<dbReference type="GO" id="GO:0000156">
    <property type="term" value="F:phosphorelay response regulator activity"/>
    <property type="evidence" value="ECO:0007669"/>
    <property type="project" value="TreeGrafter"/>
</dbReference>
<dbReference type="GO" id="GO:0000976">
    <property type="term" value="F:transcription cis-regulatory region binding"/>
    <property type="evidence" value="ECO:0007669"/>
    <property type="project" value="TreeGrafter"/>
</dbReference>
<dbReference type="GO" id="GO:0006355">
    <property type="term" value="P:regulation of DNA-templated transcription"/>
    <property type="evidence" value="ECO:0007669"/>
    <property type="project" value="InterPro"/>
</dbReference>
<dbReference type="CDD" id="cd17614">
    <property type="entry name" value="REC_OmpR_YycF-like"/>
    <property type="match status" value="1"/>
</dbReference>
<dbReference type="CDD" id="cd00383">
    <property type="entry name" value="trans_reg_C"/>
    <property type="match status" value="1"/>
</dbReference>
<dbReference type="FunFam" id="1.10.10.10:FF:000089">
    <property type="entry name" value="Alkaline phosphatase synthesis response regulator"/>
    <property type="match status" value="1"/>
</dbReference>
<dbReference type="FunFam" id="3.40.50.2300:FF:000052">
    <property type="entry name" value="DNA-binding response regulator YycF"/>
    <property type="match status" value="1"/>
</dbReference>
<dbReference type="Gene3D" id="3.40.50.2300">
    <property type="match status" value="1"/>
</dbReference>
<dbReference type="Gene3D" id="6.10.250.690">
    <property type="match status" value="1"/>
</dbReference>
<dbReference type="Gene3D" id="1.10.10.10">
    <property type="entry name" value="Winged helix-like DNA-binding domain superfamily/Winged helix DNA-binding domain"/>
    <property type="match status" value="1"/>
</dbReference>
<dbReference type="InterPro" id="IPR011006">
    <property type="entry name" value="CheY-like_superfamily"/>
</dbReference>
<dbReference type="InterPro" id="IPR001867">
    <property type="entry name" value="OmpR/PhoB-type_DNA-bd"/>
</dbReference>
<dbReference type="InterPro" id="IPR047791">
    <property type="entry name" value="Resp_reg_WalR"/>
</dbReference>
<dbReference type="InterPro" id="IPR016032">
    <property type="entry name" value="Sig_transdc_resp-reg_C-effctor"/>
</dbReference>
<dbReference type="InterPro" id="IPR001789">
    <property type="entry name" value="Sig_transdc_resp-reg_receiver"/>
</dbReference>
<dbReference type="InterPro" id="IPR039420">
    <property type="entry name" value="WalR-like"/>
</dbReference>
<dbReference type="InterPro" id="IPR036388">
    <property type="entry name" value="WH-like_DNA-bd_sf"/>
</dbReference>
<dbReference type="NCBIfam" id="NF040534">
    <property type="entry name" value="resp_reg_YycF"/>
    <property type="match status" value="1"/>
</dbReference>
<dbReference type="PANTHER" id="PTHR48111:SF40">
    <property type="entry name" value="PHOSPHATE REGULON TRANSCRIPTIONAL REGULATORY PROTEIN PHOB"/>
    <property type="match status" value="1"/>
</dbReference>
<dbReference type="PANTHER" id="PTHR48111">
    <property type="entry name" value="REGULATOR OF RPOS"/>
    <property type="match status" value="1"/>
</dbReference>
<dbReference type="Pfam" id="PF00072">
    <property type="entry name" value="Response_reg"/>
    <property type="match status" value="1"/>
</dbReference>
<dbReference type="Pfam" id="PF00486">
    <property type="entry name" value="Trans_reg_C"/>
    <property type="match status" value="1"/>
</dbReference>
<dbReference type="SMART" id="SM00448">
    <property type="entry name" value="REC"/>
    <property type="match status" value="1"/>
</dbReference>
<dbReference type="SMART" id="SM00862">
    <property type="entry name" value="Trans_reg_C"/>
    <property type="match status" value="1"/>
</dbReference>
<dbReference type="SUPFAM" id="SSF46894">
    <property type="entry name" value="C-terminal effector domain of the bipartite response regulators"/>
    <property type="match status" value="1"/>
</dbReference>
<dbReference type="SUPFAM" id="SSF52172">
    <property type="entry name" value="CheY-like"/>
    <property type="match status" value="1"/>
</dbReference>
<dbReference type="PROSITE" id="PS51755">
    <property type="entry name" value="OMPR_PHOB"/>
    <property type="match status" value="1"/>
</dbReference>
<dbReference type="PROSITE" id="PS50110">
    <property type="entry name" value="RESPONSE_REGULATORY"/>
    <property type="match status" value="1"/>
</dbReference>
<reference key="1">
    <citation type="submission" date="2007-06" db="EMBL/GenBank/DDBJ databases">
        <title>Complete sequence of chromosome of Staphylococcus aureus subsp. aureus JH1.</title>
        <authorList>
            <consortium name="US DOE Joint Genome Institute"/>
            <person name="Copeland A."/>
            <person name="Lucas S."/>
            <person name="Lapidus A."/>
            <person name="Barry K."/>
            <person name="Detter J.C."/>
            <person name="Glavina del Rio T."/>
            <person name="Hammon N."/>
            <person name="Israni S."/>
            <person name="Dalin E."/>
            <person name="Tice H."/>
            <person name="Pitluck S."/>
            <person name="Chain P."/>
            <person name="Malfatti S."/>
            <person name="Shin M."/>
            <person name="Vergez L."/>
            <person name="Schmutz J."/>
            <person name="Larimer F."/>
            <person name="Land M."/>
            <person name="Hauser L."/>
            <person name="Kyrpides N."/>
            <person name="Ivanova N."/>
            <person name="Tomasz A."/>
            <person name="Richardson P."/>
        </authorList>
    </citation>
    <scope>NUCLEOTIDE SEQUENCE [LARGE SCALE GENOMIC DNA]</scope>
    <source>
        <strain>JH1</strain>
    </source>
</reference>
<accession>A6TXG8</accession>
<protein>
    <recommendedName>
        <fullName evidence="6">Transcriptional regulatory protein WalR</fullName>
    </recommendedName>
</protein>
<gene>
    <name type="primary">walR</name>
    <name type="ordered locus">SaurJH1_0018</name>
</gene>
<name>WALR_STAA2</name>
<feature type="chain" id="PRO_0000353034" description="Transcriptional regulatory protein WalR">
    <location>
        <begin position="1"/>
        <end position="233"/>
    </location>
</feature>
<feature type="domain" description="Response regulatory" evidence="4">
    <location>
        <begin position="4"/>
        <end position="117"/>
    </location>
</feature>
<feature type="DNA-binding region" description="OmpR/PhoB-type" evidence="5">
    <location>
        <begin position="132"/>
        <end position="231"/>
    </location>
</feature>
<feature type="modified residue" description="4-aspartylphosphate" evidence="4">
    <location>
        <position position="53"/>
    </location>
</feature>
<feature type="modified residue" description="Phosphothreonine" evidence="2">
    <location>
        <position position="101"/>
    </location>
</feature>
<keyword id="KW-0010">Activator</keyword>
<keyword id="KW-0963">Cytoplasm</keyword>
<keyword id="KW-0238">DNA-binding</keyword>
<keyword id="KW-0597">Phosphoprotein</keyword>
<keyword id="KW-0804">Transcription</keyword>
<keyword id="KW-0805">Transcription regulation</keyword>
<keyword id="KW-0902">Two-component regulatory system</keyword>
<comment type="function">
    <text evidence="1 3">Member of the two-component regulatory system WalK/WalR that regulates genes involved in cell wall metabolism, virulence regulation, biofilm production, oxidative stress resistance and antibiotic resistance via direct or indirect regulation of autolysins (By similarity). Functions as a transcription regulator by direct binding to promoter regions (By similarity).</text>
</comment>
<comment type="subcellular location">
    <subcellularLocation>
        <location evidence="6">Cytoplasm</location>
    </subcellularLocation>
</comment>
<comment type="PTM">
    <text evidence="2 3">Phosphorylated by WalK on Asp-53 (By similarity). Phosphorylated by PknB on Thr-101 (By similarity).</text>
</comment>
<sequence length="233" mass="27192">MARKVVVVDDEKPIADILEFNLKKEGYDVYCAYDGNDAVDLIYEEEPDIVLLDIMLPGRDGMEVCREVRKKYEMPIIMLTAKDSEIDKVLGLELGADDYVTKPFSTRELIARVKANLRRHYSQPAQDTGNVTNEITIKDIVIYPDAYSIKKRGEDIELTHREFELFHYLSKHMGQVMTREHLLQTVWGYDYFGDVRTVDVTIRRLREKIEDDPSHPEYIVTRRGVGYFLQQHE</sequence>
<organism>
    <name type="scientific">Staphylococcus aureus (strain JH1)</name>
    <dbReference type="NCBI Taxonomy" id="359787"/>
    <lineage>
        <taxon>Bacteria</taxon>
        <taxon>Bacillati</taxon>
        <taxon>Bacillota</taxon>
        <taxon>Bacilli</taxon>
        <taxon>Bacillales</taxon>
        <taxon>Staphylococcaceae</taxon>
        <taxon>Staphylococcus</taxon>
    </lineage>
</organism>
<proteinExistence type="inferred from homology"/>